<evidence type="ECO:0000250" key="1"/>
<evidence type="ECO:0000255" key="2"/>
<evidence type="ECO:0000255" key="3">
    <source>
        <dbReference type="PROSITE-ProRule" id="PRU00114"/>
    </source>
</evidence>
<evidence type="ECO:0000255" key="4">
    <source>
        <dbReference type="PROSITE-ProRule" id="PRU00159"/>
    </source>
</evidence>
<evidence type="ECO:0000255" key="5">
    <source>
        <dbReference type="PROSITE-ProRule" id="PRU10028"/>
    </source>
</evidence>
<evidence type="ECO:0000269" key="6">
    <source>
    </source>
</evidence>
<evidence type="ECO:0000305" key="7"/>
<organism>
    <name type="scientific">Dugesia japonica</name>
    <name type="common">Planarian</name>
    <dbReference type="NCBI Taxonomy" id="6161"/>
    <lineage>
        <taxon>Eukaryota</taxon>
        <taxon>Metazoa</taxon>
        <taxon>Spiralia</taxon>
        <taxon>Lophotrochozoa</taxon>
        <taxon>Platyhelminthes</taxon>
        <taxon>Rhabditophora</taxon>
        <taxon>Seriata</taxon>
        <taxon>Tricladida</taxon>
        <taxon>Continenticola</taxon>
        <taxon>Geoplanoidea</taxon>
        <taxon>Dugesiidae</taxon>
        <taxon>Dugesia</taxon>
    </lineage>
</organism>
<feature type="signal peptide" evidence="2">
    <location>
        <begin position="1"/>
        <end position="18"/>
    </location>
</feature>
<feature type="chain" id="PRO_0000249213" description="Fibroblast growth factor receptor 2">
    <location>
        <begin position="19"/>
        <end position="887"/>
    </location>
</feature>
<feature type="topological domain" description="Extracellular" evidence="2">
    <location>
        <begin position="19"/>
        <end position="416"/>
    </location>
</feature>
<feature type="transmembrane region" description="Helical" evidence="2">
    <location>
        <begin position="417"/>
        <end position="437"/>
    </location>
</feature>
<feature type="topological domain" description="Cytoplasmic" evidence="2">
    <location>
        <begin position="438"/>
        <end position="887"/>
    </location>
</feature>
<feature type="domain" description="Ig-like C2-type 1">
    <location>
        <begin position="22"/>
        <end position="115"/>
    </location>
</feature>
<feature type="domain" description="Ig-like C2-type 2">
    <location>
        <begin position="180"/>
        <end position="260"/>
    </location>
</feature>
<feature type="domain" description="Ig-like C2-type 3">
    <location>
        <begin position="297"/>
        <end position="387"/>
    </location>
</feature>
<feature type="domain" description="Protein kinase" evidence="4">
    <location>
        <begin position="585"/>
        <end position="862"/>
    </location>
</feature>
<feature type="active site" description="Proton acceptor" evidence="4 5">
    <location>
        <position position="728"/>
    </location>
</feature>
<feature type="binding site" evidence="4">
    <location>
        <begin position="591"/>
        <end position="599"/>
    </location>
    <ligand>
        <name>ATP</name>
        <dbReference type="ChEBI" id="CHEBI:30616"/>
    </ligand>
</feature>
<feature type="binding site" evidence="4">
    <location>
        <position position="619"/>
    </location>
    <ligand>
        <name>ATP</name>
        <dbReference type="ChEBI" id="CHEBI:30616"/>
    </ligand>
</feature>
<feature type="modified residue" description="Phosphotyrosine; by autocatalysis" evidence="1">
    <location>
        <position position="757"/>
    </location>
</feature>
<feature type="glycosylation site" description="N-linked (GlcNAc...) asparagine" evidence="2">
    <location>
        <position position="28"/>
    </location>
</feature>
<feature type="glycosylation site" description="N-linked (GlcNAc...) asparagine" evidence="2">
    <location>
        <position position="74"/>
    </location>
</feature>
<feature type="glycosylation site" description="N-linked (GlcNAc...) asparagine" evidence="2">
    <location>
        <position position="93"/>
    </location>
</feature>
<feature type="glycosylation site" description="N-linked (GlcNAc...) asparagine" evidence="2">
    <location>
        <position position="230"/>
    </location>
</feature>
<feature type="glycosylation site" description="N-linked (GlcNAc...) asparagine" evidence="2">
    <location>
        <position position="261"/>
    </location>
</feature>
<feature type="glycosylation site" description="N-linked (GlcNAc...) asparagine" evidence="2">
    <location>
        <position position="268"/>
    </location>
</feature>
<feature type="glycosylation site" description="N-linked (GlcNAc...) asparagine" evidence="2">
    <location>
        <position position="328"/>
    </location>
</feature>
<feature type="glycosylation site" description="N-linked (GlcNAc...) asparagine" evidence="2">
    <location>
        <position position="334"/>
    </location>
</feature>
<feature type="glycosylation site" description="N-linked (GlcNAc...) asparagine" evidence="2">
    <location>
        <position position="364"/>
    </location>
</feature>
<feature type="disulfide bond" evidence="3">
    <location>
        <begin position="43"/>
        <end position="104"/>
    </location>
</feature>
<feature type="disulfide bond" evidence="3">
    <location>
        <begin position="313"/>
        <end position="380"/>
    </location>
</feature>
<protein>
    <recommendedName>
        <fullName>Fibroblast growth factor receptor 2</fullName>
        <shortName>DjFgfr2</shortName>
        <shortName>FGFR-2</shortName>
        <ecNumber>2.7.10.1</ecNumber>
    </recommendedName>
    <alternativeName>
        <fullName>DjPTK1</fullName>
    </alternativeName>
</protein>
<name>FGFR2_DUGJA</name>
<comment type="function">
    <text>Receptor for basic fibroblast growth factor.</text>
</comment>
<comment type="catalytic activity">
    <reaction evidence="5">
        <text>L-tyrosyl-[protein] + ATP = O-phospho-L-tyrosyl-[protein] + ADP + H(+)</text>
        <dbReference type="Rhea" id="RHEA:10596"/>
        <dbReference type="Rhea" id="RHEA-COMP:10136"/>
        <dbReference type="Rhea" id="RHEA-COMP:20101"/>
        <dbReference type="ChEBI" id="CHEBI:15378"/>
        <dbReference type="ChEBI" id="CHEBI:30616"/>
        <dbReference type="ChEBI" id="CHEBI:46858"/>
        <dbReference type="ChEBI" id="CHEBI:61978"/>
        <dbReference type="ChEBI" id="CHEBI:456216"/>
        <dbReference type="EC" id="2.7.10.1"/>
    </reaction>
</comment>
<comment type="subcellular location">
    <subcellularLocation>
        <location evidence="7">Membrane</location>
        <topology evidence="7">Single-pass type I membrane protein</topology>
    </subcellularLocation>
</comment>
<comment type="tissue specificity">
    <text evidence="6">Expressed in brain, stem cells and the mesenchymal cells.</text>
</comment>
<comment type="developmental stage">
    <text evidence="6">Expression is observed in the cephalic ganglion and mesenchymal space in intact planarians. In regenerating planarians, accumulation was observed in the blastema and in fragments regenerating either a pharynx or a brain.</text>
</comment>
<comment type="similarity">
    <text evidence="4">Belongs to the protein kinase superfamily. Tyr protein kinase family. Fibroblast growth factor receptor subfamily.</text>
</comment>
<dbReference type="EC" id="2.7.10.1"/>
<dbReference type="EMBL" id="AB074426">
    <property type="protein sequence ID" value="BAB92086.1"/>
    <property type="molecule type" value="mRNA"/>
</dbReference>
<dbReference type="SMR" id="Q8MY85"/>
<dbReference type="GlyCosmos" id="Q8MY85">
    <property type="glycosylation" value="9 sites, No reported glycans"/>
</dbReference>
<dbReference type="GO" id="GO:0005886">
    <property type="term" value="C:plasma membrane"/>
    <property type="evidence" value="ECO:0007669"/>
    <property type="project" value="TreeGrafter"/>
</dbReference>
<dbReference type="GO" id="GO:0043235">
    <property type="term" value="C:receptor complex"/>
    <property type="evidence" value="ECO:0007669"/>
    <property type="project" value="TreeGrafter"/>
</dbReference>
<dbReference type="GO" id="GO:0005524">
    <property type="term" value="F:ATP binding"/>
    <property type="evidence" value="ECO:0007669"/>
    <property type="project" value="UniProtKB-KW"/>
</dbReference>
<dbReference type="GO" id="GO:0004714">
    <property type="term" value="F:transmembrane receptor protein tyrosine kinase activity"/>
    <property type="evidence" value="ECO:0007669"/>
    <property type="project" value="UniProtKB-EC"/>
</dbReference>
<dbReference type="GO" id="GO:0007169">
    <property type="term" value="P:cell surface receptor protein tyrosine kinase signaling pathway"/>
    <property type="evidence" value="ECO:0007669"/>
    <property type="project" value="TreeGrafter"/>
</dbReference>
<dbReference type="CDD" id="cd00096">
    <property type="entry name" value="Ig"/>
    <property type="match status" value="1"/>
</dbReference>
<dbReference type="CDD" id="cd00192">
    <property type="entry name" value="PTKc"/>
    <property type="match status" value="1"/>
</dbReference>
<dbReference type="FunFam" id="1.10.510.10:FF:000554">
    <property type="entry name" value="Predicted protein"/>
    <property type="match status" value="1"/>
</dbReference>
<dbReference type="Gene3D" id="2.60.40.10">
    <property type="entry name" value="Immunoglobulins"/>
    <property type="match status" value="1"/>
</dbReference>
<dbReference type="Gene3D" id="3.30.200.20">
    <property type="entry name" value="Phosphorylase Kinase, domain 1"/>
    <property type="match status" value="1"/>
</dbReference>
<dbReference type="Gene3D" id="1.10.510.10">
    <property type="entry name" value="Transferase(Phosphotransferase) domain 1"/>
    <property type="match status" value="1"/>
</dbReference>
<dbReference type="InterPro" id="IPR007110">
    <property type="entry name" value="Ig-like_dom"/>
</dbReference>
<dbReference type="InterPro" id="IPR036179">
    <property type="entry name" value="Ig-like_dom_sf"/>
</dbReference>
<dbReference type="InterPro" id="IPR013783">
    <property type="entry name" value="Ig-like_fold"/>
</dbReference>
<dbReference type="InterPro" id="IPR011009">
    <property type="entry name" value="Kinase-like_dom_sf"/>
</dbReference>
<dbReference type="InterPro" id="IPR000719">
    <property type="entry name" value="Prot_kinase_dom"/>
</dbReference>
<dbReference type="InterPro" id="IPR017441">
    <property type="entry name" value="Protein_kinase_ATP_BS"/>
</dbReference>
<dbReference type="InterPro" id="IPR050122">
    <property type="entry name" value="RTK"/>
</dbReference>
<dbReference type="InterPro" id="IPR001245">
    <property type="entry name" value="Ser-Thr/Tyr_kinase_cat_dom"/>
</dbReference>
<dbReference type="InterPro" id="IPR008266">
    <property type="entry name" value="Tyr_kinase_AS"/>
</dbReference>
<dbReference type="InterPro" id="IPR020635">
    <property type="entry name" value="Tyr_kinase_cat_dom"/>
</dbReference>
<dbReference type="PANTHER" id="PTHR24416:SF550">
    <property type="entry name" value="FIBROBLAST GROWTH FACTOR RECEPTOR HOMOLOG 1-RELATED"/>
    <property type="match status" value="1"/>
</dbReference>
<dbReference type="PANTHER" id="PTHR24416">
    <property type="entry name" value="TYROSINE-PROTEIN KINASE RECEPTOR"/>
    <property type="match status" value="1"/>
</dbReference>
<dbReference type="Pfam" id="PF07714">
    <property type="entry name" value="PK_Tyr_Ser-Thr"/>
    <property type="match status" value="1"/>
</dbReference>
<dbReference type="PIRSF" id="PIRSF000615">
    <property type="entry name" value="TyrPK_CSF1-R"/>
    <property type="match status" value="1"/>
</dbReference>
<dbReference type="PRINTS" id="PR00109">
    <property type="entry name" value="TYRKINASE"/>
</dbReference>
<dbReference type="SMART" id="SM00219">
    <property type="entry name" value="TyrKc"/>
    <property type="match status" value="1"/>
</dbReference>
<dbReference type="SUPFAM" id="SSF48726">
    <property type="entry name" value="Immunoglobulin"/>
    <property type="match status" value="2"/>
</dbReference>
<dbReference type="SUPFAM" id="SSF56112">
    <property type="entry name" value="Protein kinase-like (PK-like)"/>
    <property type="match status" value="1"/>
</dbReference>
<dbReference type="PROSITE" id="PS50835">
    <property type="entry name" value="IG_LIKE"/>
    <property type="match status" value="1"/>
</dbReference>
<dbReference type="PROSITE" id="PS00107">
    <property type="entry name" value="PROTEIN_KINASE_ATP"/>
    <property type="match status" value="1"/>
</dbReference>
<dbReference type="PROSITE" id="PS50011">
    <property type="entry name" value="PROTEIN_KINASE_DOM"/>
    <property type="match status" value="1"/>
</dbReference>
<dbReference type="PROSITE" id="PS00109">
    <property type="entry name" value="PROTEIN_KINASE_TYR"/>
    <property type="match status" value="1"/>
</dbReference>
<proteinExistence type="evidence at transcript level"/>
<gene>
    <name type="primary">FGFR2</name>
</gene>
<accession>Q8MY85</accession>
<reference key="1">
    <citation type="journal article" date="2002" name="Dev. Growth Differ.">
        <title>Planarian fibroblast growth factor receptor homologs expressed in stem cells and cephalic ganglions.</title>
        <authorList>
            <person name="Ogawa K."/>
            <person name="Kobayashi C."/>
            <person name="Hayashi T."/>
            <person name="Orii H."/>
            <person name="Watanabe K."/>
            <person name="Agata K."/>
        </authorList>
    </citation>
    <scope>NUCLEOTIDE SEQUENCE [MRNA]</scope>
    <scope>DEVELOPMENTAL STAGE</scope>
    <scope>TISSUE SPECIFICITY</scope>
    <source>
        <strain>GI</strain>
    </source>
</reference>
<keyword id="KW-0067">ATP-binding</keyword>
<keyword id="KW-1015">Disulfide bond</keyword>
<keyword id="KW-0325">Glycoprotein</keyword>
<keyword id="KW-0393">Immunoglobulin domain</keyword>
<keyword id="KW-0418">Kinase</keyword>
<keyword id="KW-0472">Membrane</keyword>
<keyword id="KW-0547">Nucleotide-binding</keyword>
<keyword id="KW-0597">Phosphoprotein</keyword>
<keyword id="KW-0675">Receptor</keyword>
<keyword id="KW-0677">Repeat</keyword>
<keyword id="KW-0732">Signal</keyword>
<keyword id="KW-0808">Transferase</keyword>
<keyword id="KW-0812">Transmembrane</keyword>
<keyword id="KW-1133">Transmembrane helix</keyword>
<keyword id="KW-0829">Tyrosine-protein kinase</keyword>
<sequence>MLNKFIVIVTMLAMWNYAQDCNFELSKNETVQFTSFLPLILNCASISKFDTDLCETINDERPYNWYFQNKKIGNETKGKIKLVSSSQQMIIFNGSASDEGNYMCETINNNKEFISKTFDARMIEPSMTQMELLLNSFPNDHQEEINGRIYWLPEMILNHIRDVVIINQGAESDLHSFYYVSGSDSQISTFDVQWYFHYQPKSEDKTIIDHNIKTFYSSCNDLDLLPRKVNGSCYSSRLYLYNVEIKDQGFYSVEATLRMKNGSSHGLNFTYELKINIANILDPDKTNSILSTPQISFNLNSRVCINDRFDWICKVTPVVSYYVTIYKNNSNPNNITVLAESEVLQMNIDGNSGQGFYLKSSTVNYSVNSVQREHAGVYACRIINFKDYSSDHQNRHEPEVLMRLTVKDCVGNSYFTIIWYSISVGIIILVVISFLIIRLYNKYSNGYIVKTVIVQHPNKLYVPHDTCFPLLMPDITIKTIHKHINSSEDSLLQQKHFTNNSNIPFSQKISKYFRKSFIFSYRHVDVSSSNLDSPLGVISNTETNKLTSNSLTVETQRPQLILQNDANTKYILPSNIGWIFSRDSLIIGSKIGEGAFGIVYSALVKSFSENSASVEVAIKTLHTSFGDQDVINLIQELEMMKIIGRHRHIISLYGACIDNGHPYMVIELAKHGNLRDFLRAQRSQSKVGEIQNSGGLVTRLTVTDFLRFSIEIAEGMEYLSSRKIIHRDLAARNVLVDQYVEMKIADFGLTRIVENYYRKTTDGRLPIKWMAPECLLDRVYTVKSDVWSYGIVLWEIFTMGQTPYPTIQSDGMHQALRNGIRNEKPALASDEMYRLMLTIWNDDPLERHTFSEIIDKLTHIQLSNGGSSPKRDYLEISSNQCYSTTIV</sequence>